<comment type="function">
    <molecule>Botulinum neurotoxin type X</molecule>
    <text evidence="1 4">Botulinum toxin causes flaccid paralysis by inhibiting neurotransmitter (acetylcholine) release from the presynaptic membranes of nerve terminals of eukaryotic host skeletal and autonomic nervous system, with frequent heart or respiratory failure. Precursor of botulinum neurotoxin X which has 2 coreceptors; complex polysialylated gangliosides found on neural tissue and specific membrane-anchored proteins found in synaptic vesicles. Receptor proteins are exposed on host presynaptic cell membrane during neurotransmitter release, when the toxin heavy chain (HC) binds to them. Upon synaptic vesicle recycling the toxin is taken up via the endocytic pathway. When the pH of the toxin-containing endosome drops a structural rearrangement occurs so that the N-terminus of HC forms pores that allows the light chain (LC) to translocate into the cytosol. Once in the cytosol the disulfide bond linking the 2 subunits is reduced and LC cleaves its target protein on synaptic vesicles, preventing their fusion with the cytoplasmic membrane and thus neurotransmitter release (By similarity). Artificially assembled BoNT/X cleaves synaptobrevin-2/VAMP2 and VAMP4 in cultured rat neurons and causes flaccid paralysis in mice (PubMed:28770820).</text>
</comment>
<comment type="function">
    <molecule>Botulinum neurotoxin X light chain</molecule>
    <text evidence="4 5">Has proteolytic activity. After translocation into the eukaryotic host cytosol, LC hydrolyzes the '66-Arg-|-Ala-67' bond in synaptobrevin-2/VAMP2, and the equivalent bonds in 'Arg-|-Ala' bonds in VAMP1 and VAMP3, thus blocking neurotransmitter release (PubMed:28770820). Has a wider target range than most BoNTs, as it also cleaves the '87-Arg-|-Ser-89' bond in VAMP4, the '40-Arg-|-Ser-41' bond in VAMP5 and the '173-Lys-|-Ser-174' bond in YKT6; whether these are physiologically relevant substrates is unknown (PubMed:28770820). BoNT/X is 10-fold more efficient than BoNT/B and 40-fold more efficient than TeTX on an artificial human VAMP1 substrate (PubMed:29540745).</text>
</comment>
<comment type="function">
    <molecule>Botulinum neurotoxin X heavy chain</molecule>
    <text evidence="2 4">Responsible for epithelial cell transcytosis, host nerve cell targeting and translocation of light chain (LC) into host cytosol. Composed of 3 subdomains; the translocation domain (TD), and N-terminus and C-terminus of the receptor-binding domain (RBD). The RBD is responsible for the adherence of the toxin to the cell surface. It simultaneously recognizes 2 coreceptors; polysialated gangliosides and an unknown receptor protein in close proximity on host synaptic vesicles. The N-terminus of the TD wraps an extended belt around the perimeter of the LC, protecting Zn(2+) in the active site (By similarity). The TD inserts into synaptic vesicle membrane to allow translocation into the host cytosol (By similarity). Protein ligation of the RBD to the rest of the toxin (creates an artificial whole toxin) greatly increases VAMP2 degradation, and thus neuron uptake (PubMed:28770820).</text>
</comment>
<comment type="catalytic activity">
    <reaction evidence="4">
        <text>Limited hydrolysis of proteins of the neuroexocytosis apparatus, synaptobrevins, SNAP25 or syntaxin. No detected action on small molecule substrates.</text>
        <dbReference type="EC" id="3.4.24.69"/>
    </reaction>
</comment>
<comment type="cofactor">
    <cofactor evidence="5">
        <name>Zn(2+)</name>
        <dbReference type="ChEBI" id="CHEBI:29105"/>
    </cofactor>
    <text evidence="5">Binds 1 zinc ion per subunit (PubMed:29540745).</text>
</comment>
<comment type="activity regulation">
    <text evidence="4">VAMP2 cleavage inhibited by EDTA.</text>
</comment>
<comment type="biophysicochemical properties">
    <kinetics>
        <KM evidence="5">4.3 uM for a human VAMP1 fragment (residues 34-87) construct</KM>
        <text evidence="5">Apparent rate is 271 min(-1).</text>
    </kinetics>
</comment>
<comment type="subunit">
    <text evidence="8">Heterodimer; disulfide-linked heterodimer of a light chain (LC) and heavy chain (HC) (PubMed:28770820).</text>
</comment>
<comment type="subcellular location">
    <molecule>Botulinum neurotoxin type X</molecule>
    <subcellularLocation>
        <location evidence="1">Secreted</location>
    </subcellularLocation>
</comment>
<comment type="subcellular location">
    <molecule>Botulinum neurotoxin X light chain</molecule>
    <subcellularLocation>
        <location evidence="1">Secreted</location>
    </subcellularLocation>
    <subcellularLocation>
        <location evidence="1">Host cytoplasm</location>
        <location evidence="1">Host cytosol</location>
    </subcellularLocation>
</comment>
<comment type="subcellular location">
    <molecule>Botulinum neurotoxin X heavy chain</molecule>
    <subcellularLocation>
        <location evidence="1">Secreted</location>
    </subcellularLocation>
    <subcellularLocation>
        <location evidence="1">Host synapse</location>
        <location evidence="1">Host presynaptic cell membrane</location>
    </subcellularLocation>
    <subcellularLocation>
        <location evidence="1">Host cytoplasmic vesicle</location>
        <location evidence="1">Host secretory vesicle</location>
        <location evidence="1">Host synaptic vesicle membrane</location>
    </subcellularLocation>
</comment>
<comment type="domain">
    <molecule>Botulinum neurotoxin X light chain</molecule>
    <text evidence="4">Has protease activity.</text>
</comment>
<comment type="domain">
    <molecule>Botulinum neurotoxin X heavy chain</molecule>
    <text evidence="1">Has 3 functional domains; the translocation domain (TD) and the receptor-binding domain (RBD) which is further subdivided into N- and C-terminal domains (N-RBD and C-RBD). The N-terminus of the TD wraps an extended belt around the perimeter of the LC, protecting Zn(2+) in the active site and may be a pseudosubstrate inhibitor which serves as an intramolecular chaperone for the LC prior to its translocation into the host cytosol. The RBD binds transiently exposed coreceptors on the host presynaptic cell membrane.</text>
</comment>
<comment type="PTM">
    <text evidence="8">An interchain disulfide bond is required for toxin stability in an artificial construct with the light chain and translocation domain; which of Cys-461 or Cys-467 forms the disulfide bond with Cys-423 in vivo is unknown.</text>
</comment>
<comment type="biotechnology">
    <text evidence="8">The inactive construct (Ala-360--363-Tyr) can be used to generate antibodies against this serotype. Additionally the enlarged substrate specificity can be used to understand the function of VAMP4, VAMP5 and YKT6.</text>
</comment>
<comment type="miscellaneous">
    <text evidence="4">There are seven antigenically distinct forms of botulinum neurotoxin: Types A, B, C, D, E, F, and G; new subtypes are quite frequent. This toxin is not recognized or neutralized by any of the antisera against the standard serotypes (PubMed:28770820).</text>
</comment>
<comment type="miscellaneous">
    <text evidence="1">Botulism poisoning is usually food-borne, either by ingesting toxin or bacterial-contaminated food, or less frequently by inhalation poisoning. In both cases the neurotoxin binds to the apical surface of epithelial cells in the gut or airway. Toxin undergoes receptor-mediated endocytosis (using a different receptor than on target nerve cells), transcytosis across the epithelial cells and release into the general circulation. Once in the general circulation it binds to its target cells.</text>
</comment>
<comment type="miscellaneous">
    <text evidence="6 8">This strain was isolated from an infant botulism patient in Japan in 1996; toxicity of this strain is due to a type B neurotoxin (PubMed:8942019). This locus has includes a number of other genes usually associated with the botulinum neurotoxin cluster in Clostridia (p47, hemagglutinin genes and the OrfX cluster), which should permit the toxin to survive in a host. It remains unknown whether BoNT/X is ever produced in C.botulinum strain 111.</text>
</comment>
<comment type="similarity">
    <text evidence="7">Belongs to the peptidase M27 family.</text>
</comment>
<gene>
    <name type="ORF">CBB2_0680</name>
</gene>
<proteinExistence type="evidence at protein level"/>
<keyword id="KW-0002">3D-structure</keyword>
<keyword id="KW-1015">Disulfide bond</keyword>
<keyword id="KW-1032">Host cell membrane</keyword>
<keyword id="KW-1035">Host cytoplasm</keyword>
<keyword id="KW-1036">Host cytoplasmic vesicle</keyword>
<keyword id="KW-1043">Host membrane</keyword>
<keyword id="KW-1051">Host synapse</keyword>
<keyword id="KW-0378">Hydrolase</keyword>
<keyword id="KW-0472">Membrane</keyword>
<keyword id="KW-0479">Metal-binding</keyword>
<keyword id="KW-0482">Metalloprotease</keyword>
<keyword id="KW-0528">Neurotoxin</keyword>
<keyword id="KW-0645">Protease</keyword>
<keyword id="KW-0964">Secreted</keyword>
<keyword id="KW-0800">Toxin</keyword>
<keyword id="KW-0843">Virulence</keyword>
<keyword id="KW-0862">Zinc</keyword>
<dbReference type="EC" id="3.4.24.69" evidence="4"/>
<dbReference type="EMBL" id="AP014696">
    <property type="protein sequence ID" value="BAQ12790.1"/>
    <property type="molecule type" value="Genomic_DNA"/>
</dbReference>
<dbReference type="RefSeq" id="WP_045538952.1">
    <property type="nucleotide sequence ID" value="NZ_AP014696.1"/>
</dbReference>
<dbReference type="PDB" id="6F47">
    <property type="method" value="X-ray"/>
    <property type="resolution" value="1.35 A"/>
    <property type="chains" value="A=1-413"/>
</dbReference>
<dbReference type="PDB" id="6F4E">
    <property type="method" value="X-ray"/>
    <property type="resolution" value="2.40 A"/>
    <property type="chains" value="A=1-423"/>
</dbReference>
<dbReference type="PDB" id="6G8U">
    <property type="method" value="X-ray"/>
    <property type="resolution" value="1.31 A"/>
    <property type="chains" value="A=2-427"/>
</dbReference>
<dbReference type="PDB" id="6G8V">
    <property type="method" value="X-ray"/>
    <property type="resolution" value="1.45 A"/>
    <property type="chains" value="A=2-442"/>
</dbReference>
<dbReference type="PDB" id="7KZ7">
    <property type="method" value="X-ray"/>
    <property type="resolution" value="1.80 A"/>
    <property type="chains" value="A=1-439"/>
</dbReference>
<dbReference type="PDB" id="8BYP">
    <property type="method" value="EM"/>
    <property type="resolution" value="3.12 A"/>
    <property type="chains" value="X=1-1306"/>
</dbReference>
<dbReference type="PDBsum" id="6F47"/>
<dbReference type="PDBsum" id="6F4E"/>
<dbReference type="PDBsum" id="6G8U"/>
<dbReference type="PDBsum" id="6G8V"/>
<dbReference type="PDBsum" id="7KZ7"/>
<dbReference type="PDBsum" id="8BYP"/>
<dbReference type="EMDB" id="EMD-16330"/>
<dbReference type="SMR" id="P0DPK1"/>
<dbReference type="BRENDA" id="3.4.24.69">
    <property type="organism ID" value="1462"/>
</dbReference>
<dbReference type="SABIO-RK" id="P0DPK1"/>
<dbReference type="GO" id="GO:0005576">
    <property type="term" value="C:extracellular region"/>
    <property type="evidence" value="ECO:0007669"/>
    <property type="project" value="UniProtKB-SubCell"/>
</dbReference>
<dbReference type="GO" id="GO:0044161">
    <property type="term" value="C:host cell cytoplasmic vesicle"/>
    <property type="evidence" value="ECO:0007669"/>
    <property type="project" value="UniProtKB-SubCell"/>
</dbReference>
<dbReference type="GO" id="GO:0044164">
    <property type="term" value="C:host cell cytosol"/>
    <property type="evidence" value="ECO:0007669"/>
    <property type="project" value="UniProtKB-SubCell"/>
</dbReference>
<dbReference type="GO" id="GO:0020002">
    <property type="term" value="C:host cell plasma membrane"/>
    <property type="evidence" value="ECO:0007669"/>
    <property type="project" value="UniProtKB-KW"/>
</dbReference>
<dbReference type="GO" id="GO:0044231">
    <property type="term" value="C:host cell presynaptic membrane"/>
    <property type="evidence" value="ECO:0007669"/>
    <property type="project" value="UniProtKB-SubCell"/>
</dbReference>
<dbReference type="GO" id="GO:0016020">
    <property type="term" value="C:membrane"/>
    <property type="evidence" value="ECO:0007669"/>
    <property type="project" value="UniProtKB-KW"/>
</dbReference>
<dbReference type="GO" id="GO:0004222">
    <property type="term" value="F:metalloendopeptidase activity"/>
    <property type="evidence" value="ECO:0007669"/>
    <property type="project" value="UniProtKB-EC"/>
</dbReference>
<dbReference type="GO" id="GO:0008320">
    <property type="term" value="F:protein transmembrane transporter activity"/>
    <property type="evidence" value="ECO:0007669"/>
    <property type="project" value="InterPro"/>
</dbReference>
<dbReference type="GO" id="GO:0090729">
    <property type="term" value="F:toxin activity"/>
    <property type="evidence" value="ECO:0007669"/>
    <property type="project" value="UniProtKB-KW"/>
</dbReference>
<dbReference type="GO" id="GO:0008270">
    <property type="term" value="F:zinc ion binding"/>
    <property type="evidence" value="ECO:0007669"/>
    <property type="project" value="InterPro"/>
</dbReference>
<dbReference type="GO" id="GO:0006508">
    <property type="term" value="P:proteolysis"/>
    <property type="evidence" value="ECO:0007669"/>
    <property type="project" value="UniProtKB-KW"/>
</dbReference>
<dbReference type="CDD" id="cd23396">
    <property type="entry name" value="Toxin_R_bind_C_BoNTX_like"/>
    <property type="match status" value="1"/>
</dbReference>
<dbReference type="Gene3D" id="2.60.120.200">
    <property type="match status" value="1"/>
</dbReference>
<dbReference type="Gene3D" id="2.80.10.50">
    <property type="match status" value="1"/>
</dbReference>
<dbReference type="Gene3D" id="1.20.1120.10">
    <property type="entry name" value="Clostridium botulinum neurotoxin b, 'coiled-coil' domain"/>
    <property type="match status" value="1"/>
</dbReference>
<dbReference type="Gene3D" id="3.90.1240.10">
    <property type="entry name" value="Metalloproteases ('zincins'), catalytic domain like"/>
    <property type="match status" value="1"/>
</dbReference>
<dbReference type="InterPro" id="IPR000395">
    <property type="entry name" value="Bot/tetX_LC"/>
</dbReference>
<dbReference type="InterPro" id="IPR036248">
    <property type="entry name" value="Clostridium_toxin_transloc"/>
</dbReference>
<dbReference type="InterPro" id="IPR013320">
    <property type="entry name" value="ConA-like_dom_sf"/>
</dbReference>
<dbReference type="InterPro" id="IPR011065">
    <property type="entry name" value="Kunitz_inhibitor_STI-like_sf"/>
</dbReference>
<dbReference type="InterPro" id="IPR013104">
    <property type="entry name" value="Toxin_rcpt-bd_C"/>
</dbReference>
<dbReference type="InterPro" id="IPR012928">
    <property type="entry name" value="Toxin_rcpt-bd_N"/>
</dbReference>
<dbReference type="InterPro" id="IPR012500">
    <property type="entry name" value="Toxin_trans"/>
</dbReference>
<dbReference type="Pfam" id="PF01742">
    <property type="entry name" value="Peptidase_M27"/>
    <property type="match status" value="1"/>
</dbReference>
<dbReference type="Pfam" id="PF07951">
    <property type="entry name" value="Toxin_R_bind_C"/>
    <property type="match status" value="1"/>
</dbReference>
<dbReference type="Pfam" id="PF07953">
    <property type="entry name" value="Toxin_R_bind_N"/>
    <property type="match status" value="1"/>
</dbReference>
<dbReference type="Pfam" id="PF07952">
    <property type="entry name" value="Toxin_trans"/>
    <property type="match status" value="1"/>
</dbReference>
<dbReference type="PRINTS" id="PR00760">
    <property type="entry name" value="BONTOXILYSIN"/>
</dbReference>
<dbReference type="SUPFAM" id="SSF58091">
    <property type="entry name" value="Clostridium neurotoxins, 'coiled-coil' domain"/>
    <property type="match status" value="1"/>
</dbReference>
<dbReference type="SUPFAM" id="SSF49899">
    <property type="entry name" value="Concanavalin A-like lectins/glucanases"/>
    <property type="match status" value="1"/>
</dbReference>
<dbReference type="SUPFAM" id="SSF55486">
    <property type="entry name" value="Metalloproteases ('zincins'), catalytic domain"/>
    <property type="match status" value="1"/>
</dbReference>
<dbReference type="SUPFAM" id="SSF50386">
    <property type="entry name" value="STI-like"/>
    <property type="match status" value="1"/>
</dbReference>
<protein>
    <recommendedName>
        <fullName>Botulinum neurotoxin type X</fullName>
        <shortName>BoNT/X</shortName>
    </recommendedName>
    <alternativeName>
        <fullName>Bontoxilysin-X</fullName>
    </alternativeName>
    <component>
        <recommendedName>
            <fullName>Botulinum neurotoxin X light chain</fullName>
            <shortName>LC</shortName>
            <ecNumber evidence="4">3.4.24.69</ecNumber>
        </recommendedName>
    </component>
    <component>
        <recommendedName>
            <fullName>Botulinum neurotoxin X heavy chain</fullName>
            <shortName>HC</shortName>
        </recommendedName>
    </component>
</protein>
<name>BXX_CLOBO</name>
<reference key="1">
    <citation type="submission" date="2015-01" db="EMBL/GenBank/DDBJ databases">
        <title>Whole genome sequence of Clostridium botulinum type B strain 111.</title>
        <authorList>
            <person name="Hosomi K."/>
            <person name="Nakamura S."/>
            <person name="Motooka D."/>
            <person name="Kohda T."/>
            <person name="Sakaguchi Y."/>
            <person name="Umeda K."/>
            <person name="Iida T."/>
            <person name="Kozaki S."/>
            <person name="Mukamoto M."/>
        </authorList>
    </citation>
    <scope>NUCLEOTIDE SEQUENCE [LARGE SCALE GENOMIC DNA]</scope>
    <source>
        <strain>111 / Type B</strain>
    </source>
</reference>
<reference key="2">
    <citation type="journal article" date="1996" name="Acta Paediatr. Jpn. Overseas Ed.">
        <title>The first case of type B infant botulism in Japan.</title>
        <authorList>
            <person name="Kakinuma H."/>
            <person name="Maruyama H."/>
            <person name="Takahashi H."/>
            <person name="Yamakawa K."/>
            <person name="Nakamura S."/>
        </authorList>
    </citation>
    <scope>ISOLATION OF STRAIN</scope>
    <source>
        <strain>111 / Type B</strain>
    </source>
</reference>
<reference key="3">
    <citation type="journal article" date="2017" name="Nat. Commun.">
        <title>Identification and characterization of a novel botulinum neurotoxin.</title>
        <authorList>
            <person name="Zhang S."/>
            <person name="Masuyer G."/>
            <person name="Zhang J."/>
            <person name="Shen Y."/>
            <person name="Lundin D."/>
            <person name="Henriksson L."/>
            <person name="Miyashita S.I."/>
            <person name="Martinez-Carranza M."/>
            <person name="Dong M."/>
            <person name="Stenmark P."/>
        </authorList>
    </citation>
    <scope>FUNCTION (BOTULINUM NEUROTOXIN TYPE X</scope>
    <scope>BOTULINUM NEUROTOXIN X LIGHT CHAIN AND BOTULINUM NEUROTOXIN X HEAVY CHAIN)</scope>
    <scope>SUBSTRATE SPECIFICITY</scope>
    <scope>CATALYTIC ACTIVITY</scope>
    <scope>ACTIVITY REGULATION</scope>
    <scope>BIOTECHNOLOGY</scope>
    <scope>PROBABLE DISULFIDE BOND</scope>
    <scope>MUTAGENESIS OF 360-ARG--TYR-363; CYS-423; CYS-461 AND CYS-467</scope>
    <source>
        <strain>111 / Type B</strain>
    </source>
</reference>
<reference evidence="9 10" key="4">
    <citation type="journal article" date="2018" name="Sci. Rep.">
        <title>Structural characterisation of the catalytic domain of botulinum neurotoxin X - high activity and unique substrate specificity.</title>
        <authorList>
            <person name="Masuyer G."/>
            <person name="Zhang S."/>
            <person name="Barkho S."/>
            <person name="Shen Y."/>
            <person name="Henriksson L."/>
            <person name="Kosenina S."/>
            <person name="Dong M."/>
            <person name="Stenmark P."/>
        </authorList>
    </citation>
    <scope>X-RAY CRYSTALLOGRAPHY (1.35 ANGSTROMS) OF 1-423 IN COMPLEX WITH AND WITHOUT ZINC</scope>
    <scope>FUNCTION (BOTULINUM NEUROTOXIN X LIGHT CHAIN)</scope>
    <scope>BIOPHYSICOCHEMICAL PROPERTIES</scope>
    <scope>COFACTOR</scope>
    <source>
        <strain>111 / Type B</strain>
    </source>
</reference>
<sequence>MKLEINKFNYNDPIDGINVITMRPPRHSDKINKGKGPFKAFQVIKNIWIVPERYNFTNNTNDLNIPSEPIMEADAIYNPNYLNTPSEKDEFLQGVIKVLERIKSKPEGEKLLELISSSIPLPLVSNGALTLSDNETIAYQENNNIVSNLQANLVIYGPGPDIANNATYGLYSTPISNGEGTLSEVSFSPFYLKPFDESYGNYRSLVNIVNKFVKREFAPDPASTLMHELVHVTHNLYGISNRNFYYNFDTGKIETSRQQNSLIFEELLTFGGIDSKAISSLIIKKIIETAKNNYTTLISERLNTVTVENDLLKYIKNKIPVQGRLGNFKLDTAEFEKKLNTILFVLNESNLAQRFSILVRKHYLKERPIDPIYVNILDDNSYSTLEGFNISSQGSNDFQGQLLESSYFEKIESNALRAFIKICPRNGLLYNAIYRNSKNYLNNIDLEDKKTTSKTNVSYPCSLLNGCIEVENKDLFLISNKDSLNDINLSEEKIKPETTVFFKDKLPPQDITLSNYDFTEANSIPSISQQNILERNEELYEPIRNSLFEIKTIYVDKLTTFHFLEAQNIDESIDSSKIRVELTDSVDEALSNPNKVYSPFKNMSNTINSIETGITSTYIFYQWLRSIVKDFSDETGKIDVIDKSSDTLAIVPYIGPLLNIGNDIRHGDFVGAIELAGITALLEYVPEFTIPILVGLEVIGGELAREQVEAIVNNALDKRDQKWAEVYNITKAQWWGTIHLQINTRLAHTYKALSRQANAIKMNMEFQLANYKGNIDDKAKIKNAISETEILLNKSVEQAMKNTEKFMIKLSNSYLTKEMIPKVQDNLKNFDLETKKTLDKFIKEKEDILGTNLSSSLRRKVSIRLNKNIAFDINDIPFSEFDDLINQYKNEIEDYEVLNLGAEDGKIKDLSGTTSDINIGSDIELADGRENKAIKIKGSENSTIKIAMNKYLRFSATDNFSISFWIKHPKPTNLLNNGIEYTLVENFNQRGWKISIQDSKLIWYLRDHNNSIKIVTPDYIAFNGWNLITITNNRSKGSIVYVNGSKIEEKDISSIWNTEVDDPIIFRLKNNRDTQAFTLLDQFSIYRKELNQNEVVKLYNYYFNSNYIRDIWGNPLQYNKKYYLQTQDKPGKGLIREYWSSFGYDYVILSDSKTITFPNNIRYGALYNGSKVLIKNSKKLDGLVRNKDFIQLEIDGYNMGISADRFNEDTNYIGTTYGTTHDLTTDFEIIQRQEKYRNYCQLKTPYNIFHKSGLMSTETSKPTFHDYRDWVYSSAWYFQNYENLNLRKHTKTNWYFIPKDEGWDED</sequence>
<organism>
    <name type="scientific">Clostridium botulinum</name>
    <dbReference type="NCBI Taxonomy" id="1491"/>
    <lineage>
        <taxon>Bacteria</taxon>
        <taxon>Bacillati</taxon>
        <taxon>Bacillota</taxon>
        <taxon>Clostridia</taxon>
        <taxon>Eubacteriales</taxon>
        <taxon>Clostridiaceae</taxon>
        <taxon>Clostridium</taxon>
    </lineage>
</organism>
<evidence type="ECO:0000250" key="1">
    <source>
        <dbReference type="UniProtKB" id="P0DPI0"/>
    </source>
</evidence>
<evidence type="ECO:0000250" key="2">
    <source>
        <dbReference type="UniProtKB" id="P10844"/>
    </source>
</evidence>
<evidence type="ECO:0000255" key="3">
    <source>
        <dbReference type="PROSITE-ProRule" id="PRU10095"/>
    </source>
</evidence>
<evidence type="ECO:0000269" key="4">
    <source>
    </source>
</evidence>
<evidence type="ECO:0000269" key="5">
    <source>
    </source>
</evidence>
<evidence type="ECO:0000269" key="6">
    <source>
    </source>
</evidence>
<evidence type="ECO:0000305" key="7"/>
<evidence type="ECO:0000305" key="8">
    <source>
    </source>
</evidence>
<evidence type="ECO:0007744" key="9">
    <source>
        <dbReference type="PDB" id="6F47"/>
    </source>
</evidence>
<evidence type="ECO:0007744" key="10">
    <source>
        <dbReference type="PDB" id="6F4E"/>
    </source>
</evidence>
<evidence type="ECO:0007829" key="11">
    <source>
        <dbReference type="PDB" id="6G8U"/>
    </source>
</evidence>
<evidence type="ECO:0007829" key="12">
    <source>
        <dbReference type="PDB" id="6G8V"/>
    </source>
</evidence>
<evidence type="ECO:0007829" key="13">
    <source>
        <dbReference type="PDB" id="8BYP"/>
    </source>
</evidence>
<accession>P0DPK1</accession>
<feature type="chain" id="PRO_0000444911" description="Botulinum neurotoxin type X">
    <location>
        <begin position="1"/>
        <end position="1306"/>
    </location>
</feature>
<feature type="chain" id="PRO_0000444912" description="Botulinum neurotoxin X light chain">
    <location>
        <begin position="1"/>
        <end position="439"/>
    </location>
</feature>
<feature type="chain" id="PRO_0000444913" description="Botulinum neurotoxin X heavy chain">
    <location>
        <begin position="440"/>
        <end position="1306"/>
    </location>
</feature>
<feature type="region of interest" description="Translocation domain (TD)" evidence="1">
    <location>
        <begin position="462"/>
        <end position="889"/>
    </location>
</feature>
<feature type="region of interest" description="Belt; not required for channel formation" evidence="1">
    <location>
        <begin position="505"/>
        <end position="555"/>
    </location>
</feature>
<feature type="region of interest" description="N-terminus of receptor binding domain (N-RBD)" evidence="1">
    <location>
        <begin position="890"/>
        <end position="1103"/>
    </location>
</feature>
<feature type="region of interest" description="C-terminus of receptor binding domain (C-RBD)" evidence="1">
    <location>
        <begin position="1104"/>
        <end position="1306"/>
    </location>
</feature>
<feature type="short sequence motif" description="Host ganglioside-binding motif" evidence="1 8">
    <location>
        <begin position="1274"/>
        <end position="1277"/>
    </location>
</feature>
<feature type="active site" evidence="1 3">
    <location>
        <position position="228"/>
    </location>
</feature>
<feature type="binding site" evidence="3 5 9">
    <location>
        <position position="227"/>
    </location>
    <ligand>
        <name>Zn(2+)</name>
        <dbReference type="ChEBI" id="CHEBI:29105"/>
        <note>catalytic</note>
    </ligand>
</feature>
<feature type="binding site" evidence="3 5 9">
    <location>
        <position position="231"/>
    </location>
    <ligand>
        <name>Zn(2+)</name>
        <dbReference type="ChEBI" id="CHEBI:29105"/>
        <note>catalytic</note>
    </ligand>
</feature>
<feature type="binding site" evidence="5 9">
    <location>
        <position position="266"/>
    </location>
    <ligand>
        <name>Zn(2+)</name>
        <dbReference type="ChEBI" id="CHEBI:29105"/>
        <note>catalytic</note>
    </ligand>
</feature>
<feature type="disulfide bond" description="Interchain (between light and heavy chains)" evidence="1 8">
    <location>
        <begin position="423"/>
        <end position="467"/>
    </location>
</feature>
<feature type="mutagenesis site" description="Toxin has no activity on cultured neurons, not toxic when injected into mice." evidence="4">
    <original>RKHY</original>
    <variation>AKHF</variation>
    <location>
        <begin position="360"/>
        <end position="363"/>
    </location>
</feature>
<feature type="mutagenesis site" description="Artificially assembled toxin fragment (light chain plus translocation domain) does not digest VAMP2 in neurons, is more susceptible to proteases." evidence="4">
    <original>C</original>
    <variation>S</variation>
    <location>
        <position position="423"/>
    </location>
</feature>
<feature type="mutagenesis site" description="Slight decrease in cleavage of VAMP2 by artificially assembled toxin fragment (light chain plus translocation domain) in neurons." evidence="4">
    <original>C</original>
    <variation>S</variation>
    <location>
        <position position="461"/>
    </location>
</feature>
<feature type="mutagenesis site" description="Slight decrease in cleavage of VAMP2 by artificially assembled toxin fragment (light chain plus translocation domain) in neurons." evidence="4">
    <original>C</original>
    <variation>S</variation>
    <location>
        <position position="467"/>
    </location>
</feature>
<feature type="strand" evidence="11">
    <location>
        <begin position="16"/>
        <end position="23"/>
    </location>
</feature>
<feature type="turn" evidence="11">
    <location>
        <begin position="25"/>
        <end position="28"/>
    </location>
</feature>
<feature type="helix" evidence="11">
    <location>
        <begin position="30"/>
        <end position="32"/>
    </location>
</feature>
<feature type="strand" evidence="11">
    <location>
        <begin position="38"/>
        <end position="44"/>
    </location>
</feature>
<feature type="strand" evidence="11">
    <location>
        <begin position="47"/>
        <end position="50"/>
    </location>
</feature>
<feature type="turn" evidence="11">
    <location>
        <begin position="58"/>
        <end position="60"/>
    </location>
</feature>
<feature type="turn" evidence="11">
    <location>
        <begin position="79"/>
        <end position="82"/>
    </location>
</feature>
<feature type="helix" evidence="11">
    <location>
        <begin position="85"/>
        <end position="103"/>
    </location>
</feature>
<feature type="helix" evidence="11">
    <location>
        <begin position="106"/>
        <end position="117"/>
    </location>
</feature>
<feature type="strand" evidence="11">
    <location>
        <begin position="123"/>
        <end position="125"/>
    </location>
</feature>
<feature type="strand" evidence="11">
    <location>
        <begin position="128"/>
        <end position="130"/>
    </location>
</feature>
<feature type="strand" evidence="11">
    <location>
        <begin position="135"/>
        <end position="141"/>
    </location>
</feature>
<feature type="strand" evidence="11">
    <location>
        <begin position="144"/>
        <end position="150"/>
    </location>
</feature>
<feature type="strand" evidence="11">
    <location>
        <begin position="152"/>
        <end position="156"/>
    </location>
</feature>
<feature type="strand" evidence="11">
    <location>
        <begin position="166"/>
        <end position="170"/>
    </location>
</feature>
<feature type="turn" evidence="11">
    <location>
        <begin position="172"/>
        <end position="176"/>
    </location>
</feature>
<feature type="strand" evidence="11">
    <location>
        <begin position="177"/>
        <end position="179"/>
    </location>
</feature>
<feature type="strand" evidence="11">
    <location>
        <begin position="183"/>
        <end position="186"/>
    </location>
</feature>
<feature type="strand" evidence="11">
    <location>
        <begin position="189"/>
        <end position="192"/>
    </location>
</feature>
<feature type="strand" evidence="11">
    <location>
        <begin position="195"/>
        <end position="199"/>
    </location>
</feature>
<feature type="strand" evidence="11">
    <location>
        <begin position="213"/>
        <end position="217"/>
    </location>
</feature>
<feature type="helix" evidence="11">
    <location>
        <begin position="221"/>
        <end position="237"/>
    </location>
</feature>
<feature type="strand" evidence="11">
    <location>
        <begin position="245"/>
        <end position="247"/>
    </location>
</feature>
<feature type="turn" evidence="11">
    <location>
        <begin position="248"/>
        <end position="251"/>
    </location>
</feature>
<feature type="strand" evidence="11">
    <location>
        <begin position="252"/>
        <end position="256"/>
    </location>
</feature>
<feature type="strand" evidence="11">
    <location>
        <begin position="261"/>
        <end position="263"/>
    </location>
</feature>
<feature type="helix" evidence="11">
    <location>
        <begin position="264"/>
        <end position="270"/>
    </location>
</feature>
<feature type="helix" evidence="11">
    <location>
        <begin position="272"/>
        <end position="275"/>
    </location>
</feature>
<feature type="helix" evidence="11">
    <location>
        <begin position="280"/>
        <end position="300"/>
    </location>
</feature>
<feature type="helix" evidence="11">
    <location>
        <begin position="302"/>
        <end position="304"/>
    </location>
</feature>
<feature type="helix" evidence="11">
    <location>
        <begin position="310"/>
        <end position="318"/>
    </location>
</feature>
<feature type="strand" evidence="11">
    <location>
        <begin position="321"/>
        <end position="323"/>
    </location>
</feature>
<feature type="strand" evidence="12">
    <location>
        <begin position="327"/>
        <end position="330"/>
    </location>
</feature>
<feature type="helix" evidence="11">
    <location>
        <begin position="332"/>
        <end position="344"/>
    </location>
</feature>
<feature type="helix" evidence="11">
    <location>
        <begin position="348"/>
        <end position="354"/>
    </location>
</feature>
<feature type="strand" evidence="11">
    <location>
        <begin position="361"/>
        <end position="364"/>
    </location>
</feature>
<feature type="strand" evidence="13">
    <location>
        <begin position="366"/>
        <end position="368"/>
    </location>
</feature>
<feature type="strand" evidence="13">
    <location>
        <begin position="372"/>
        <end position="374"/>
    </location>
</feature>
<feature type="turn" evidence="11">
    <location>
        <begin position="379"/>
        <end position="381"/>
    </location>
</feature>
<feature type="turn" evidence="11">
    <location>
        <begin position="384"/>
        <end position="386"/>
    </location>
</feature>
<feature type="helix" evidence="11">
    <location>
        <begin position="391"/>
        <end position="393"/>
    </location>
</feature>
<feature type="turn" evidence="11">
    <location>
        <begin position="396"/>
        <end position="398"/>
    </location>
</feature>
<feature type="helix" evidence="11">
    <location>
        <begin position="399"/>
        <end position="401"/>
    </location>
</feature>
<feature type="strand" evidence="11">
    <location>
        <begin position="408"/>
        <end position="410"/>
    </location>
</feature>
<feature type="strand" evidence="12">
    <location>
        <begin position="418"/>
        <end position="423"/>
    </location>
</feature>
<feature type="strand" evidence="13">
    <location>
        <begin position="468"/>
        <end position="471"/>
    </location>
</feature>
<feature type="helix" evidence="13">
    <location>
        <begin position="472"/>
        <end position="474"/>
    </location>
</feature>
<feature type="turn" evidence="13">
    <location>
        <begin position="519"/>
        <end position="521"/>
    </location>
</feature>
<feature type="helix" evidence="13">
    <location>
        <begin position="560"/>
        <end position="566"/>
    </location>
</feature>
<feature type="strand" evidence="13">
    <location>
        <begin position="575"/>
        <end position="577"/>
    </location>
</feature>
<feature type="strand" evidence="13">
    <location>
        <begin position="582"/>
        <end position="584"/>
    </location>
</feature>
<feature type="helix" evidence="13">
    <location>
        <begin position="586"/>
        <end position="591"/>
    </location>
</feature>
<feature type="helix" evidence="13">
    <location>
        <begin position="603"/>
        <end position="607"/>
    </location>
</feature>
<feature type="strand" evidence="13">
    <location>
        <begin position="608"/>
        <end position="610"/>
    </location>
</feature>
<feature type="helix" evidence="13">
    <location>
        <begin position="619"/>
        <end position="634"/>
    </location>
</feature>
<feature type="turn" evidence="13">
    <location>
        <begin position="644"/>
        <end position="646"/>
    </location>
</feature>
<feature type="helix" evidence="13">
    <location>
        <begin position="654"/>
        <end position="657"/>
    </location>
</feature>
<feature type="strand" evidence="13">
    <location>
        <begin position="658"/>
        <end position="660"/>
    </location>
</feature>
<feature type="turn" evidence="13">
    <location>
        <begin position="661"/>
        <end position="664"/>
    </location>
</feature>
<feature type="helix" evidence="13">
    <location>
        <begin position="670"/>
        <end position="675"/>
    </location>
</feature>
<feature type="turn" evidence="13">
    <location>
        <begin position="677"/>
        <end position="681"/>
    </location>
</feature>
<feature type="helix" evidence="13">
    <location>
        <begin position="705"/>
        <end position="737"/>
    </location>
</feature>
<feature type="helix" evidence="13">
    <location>
        <begin position="739"/>
        <end position="769"/>
    </location>
</feature>
<feature type="helix" evidence="13">
    <location>
        <begin position="778"/>
        <end position="818"/>
    </location>
</feature>
<feature type="helix" evidence="13">
    <location>
        <begin position="820"/>
        <end position="843"/>
    </location>
</feature>
<feature type="helix" evidence="13">
    <location>
        <begin position="846"/>
        <end position="849"/>
    </location>
</feature>
<feature type="helix" evidence="13">
    <location>
        <begin position="851"/>
        <end position="864"/>
    </location>
</feature>
<feature type="helix" evidence="13">
    <location>
        <begin position="880"/>
        <end position="885"/>
    </location>
</feature>
<feature type="helix" evidence="13">
    <location>
        <begin position="887"/>
        <end position="891"/>
    </location>
</feature>
<feature type="helix" evidence="13">
    <location>
        <begin position="893"/>
        <end position="895"/>
    </location>
</feature>
<feature type="strand" evidence="13">
    <location>
        <begin position="896"/>
        <end position="903"/>
    </location>
</feature>
<feature type="strand" evidence="13">
    <location>
        <begin position="906"/>
        <end position="909"/>
    </location>
</feature>
<feature type="strand" evidence="13">
    <location>
        <begin position="917"/>
        <end position="919"/>
    </location>
</feature>
<feature type="strand" evidence="13">
    <location>
        <begin position="923"/>
        <end position="926"/>
    </location>
</feature>
<feature type="strand" evidence="13">
    <location>
        <begin position="929"/>
        <end position="931"/>
    </location>
</feature>
<feature type="strand" evidence="13">
    <location>
        <begin position="933"/>
        <end position="936"/>
    </location>
</feature>
<feature type="strand" evidence="13">
    <location>
        <begin position="939"/>
        <end position="941"/>
    </location>
</feature>
<feature type="strand" evidence="13">
    <location>
        <begin position="944"/>
        <end position="946"/>
    </location>
</feature>
<feature type="turn" evidence="13">
    <location>
        <begin position="950"/>
        <end position="952"/>
    </location>
</feature>
<feature type="strand" evidence="13">
    <location>
        <begin position="960"/>
        <end position="967"/>
    </location>
</feature>
<feature type="strand" evidence="13">
    <location>
        <begin position="973"/>
        <end position="975"/>
    </location>
</feature>
<feature type="strand" evidence="13">
    <location>
        <begin position="981"/>
        <end position="997"/>
    </location>
</feature>
<feature type="strand" evidence="13">
    <location>
        <begin position="1000"/>
        <end position="1006"/>
    </location>
</feature>
<feature type="strand" evidence="13">
    <location>
        <begin position="1011"/>
        <end position="1015"/>
    </location>
</feature>
<feature type="strand" evidence="13">
    <location>
        <begin position="1026"/>
        <end position="1033"/>
    </location>
</feature>
<feature type="turn" evidence="13">
    <location>
        <begin position="1034"/>
        <end position="1036"/>
    </location>
</feature>
<feature type="strand" evidence="13">
    <location>
        <begin position="1037"/>
        <end position="1042"/>
    </location>
</feature>
<feature type="strand" evidence="13">
    <location>
        <begin position="1045"/>
        <end position="1051"/>
    </location>
</feature>
<feature type="strand" evidence="13">
    <location>
        <begin position="1064"/>
        <end position="1066"/>
    </location>
</feature>
<feature type="strand" evidence="13">
    <location>
        <begin position="1079"/>
        <end position="1088"/>
    </location>
</feature>
<feature type="helix" evidence="13">
    <location>
        <begin position="1092"/>
        <end position="1101"/>
    </location>
</feature>
<feature type="strand" evidence="13">
    <location>
        <begin position="1111"/>
        <end position="1113"/>
    </location>
</feature>
<feature type="strand" evidence="13">
    <location>
        <begin position="1117"/>
        <end position="1119"/>
    </location>
</feature>
<feature type="strand" evidence="13">
    <location>
        <begin position="1121"/>
        <end position="1123"/>
    </location>
</feature>
<feature type="strand" evidence="13">
    <location>
        <begin position="1125"/>
        <end position="1129"/>
    </location>
</feature>
<feature type="strand" evidence="13">
    <location>
        <begin position="1133"/>
        <end position="1139"/>
    </location>
</feature>
<feature type="turn" evidence="13">
    <location>
        <begin position="1140"/>
        <end position="1143"/>
    </location>
</feature>
<feature type="strand" evidence="13">
    <location>
        <begin position="1144"/>
        <end position="1149"/>
    </location>
</feature>
<feature type="strand" evidence="13">
    <location>
        <begin position="1154"/>
        <end position="1156"/>
    </location>
</feature>
<feature type="strand" evidence="13">
    <location>
        <begin position="1162"/>
        <end position="1164"/>
    </location>
</feature>
<feature type="strand" evidence="13">
    <location>
        <begin position="1171"/>
        <end position="1173"/>
    </location>
</feature>
<feature type="strand" evidence="13">
    <location>
        <begin position="1197"/>
        <end position="1206"/>
    </location>
</feature>
<feature type="strand" evidence="13">
    <location>
        <begin position="1212"/>
        <end position="1221"/>
    </location>
</feature>
<feature type="strand" evidence="13">
    <location>
        <begin position="1228"/>
        <end position="1230"/>
    </location>
</feature>
<feature type="strand" evidence="13">
    <location>
        <begin position="1240"/>
        <end position="1243"/>
    </location>
</feature>
<feature type="strand" evidence="13">
    <location>
        <begin position="1248"/>
        <end position="1250"/>
    </location>
</feature>
<feature type="strand" evidence="13">
    <location>
        <begin position="1256"/>
        <end position="1260"/>
    </location>
</feature>
<feature type="strand" evidence="13">
    <location>
        <begin position="1263"/>
        <end position="1265"/>
    </location>
</feature>
<feature type="strand" evidence="13">
    <location>
        <begin position="1268"/>
        <end position="1272"/>
    </location>
</feature>
<feature type="helix" evidence="13">
    <location>
        <begin position="1275"/>
        <end position="1279"/>
    </location>
</feature>
<feature type="helix" evidence="13">
    <location>
        <begin position="1281"/>
        <end position="1283"/>
    </location>
</feature>
<feature type="helix" evidence="13">
    <location>
        <begin position="1288"/>
        <end position="1291"/>
    </location>
</feature>